<proteinExistence type="inferred from homology"/>
<reference key="1">
    <citation type="journal article" date="2010" name="BMC Genomics">
        <title>Complete genome sequence and lifestyle of black-pigmented Corynebacterium aurimucosum ATCC 700975 (formerly C. nigricans CN-1) isolated from a vaginal swab of a woman with spontaneous abortion.</title>
        <authorList>
            <person name="Trost E."/>
            <person name="Gotker S."/>
            <person name="Schneider J."/>
            <person name="Schneiker-Bekel S."/>
            <person name="Szczepanowski R."/>
            <person name="Tilker A."/>
            <person name="Viehoever P."/>
            <person name="Arnold W."/>
            <person name="Bekel T."/>
            <person name="Blom J."/>
            <person name="Gartemann K.H."/>
            <person name="Linke B."/>
            <person name="Goesmann A."/>
            <person name="Puhler A."/>
            <person name="Shukla S.K."/>
            <person name="Tauch A."/>
        </authorList>
    </citation>
    <scope>NUCLEOTIDE SEQUENCE [LARGE SCALE GENOMIC DNA]</scope>
    <source>
        <strain>ATCC 700975 / DSM 44827 / CIP 107346 / CN-1</strain>
    </source>
</reference>
<protein>
    <recommendedName>
        <fullName evidence="1">Large ribosomal subunit protein uL30</fullName>
    </recommendedName>
    <alternativeName>
        <fullName evidence="2">50S ribosomal protein L30</fullName>
    </alternativeName>
</protein>
<dbReference type="EMBL" id="CP001601">
    <property type="protein sequence ID" value="ACP32031.1"/>
    <property type="molecule type" value="Genomic_DNA"/>
</dbReference>
<dbReference type="RefSeq" id="WP_010189565.1">
    <property type="nucleotide sequence ID" value="NZ_ACLH01000063.1"/>
</dbReference>
<dbReference type="SMR" id="C3PL27"/>
<dbReference type="STRING" id="548476.cauri_0432"/>
<dbReference type="GeneID" id="31923049"/>
<dbReference type="KEGG" id="car:cauri_0432"/>
<dbReference type="eggNOG" id="COG1841">
    <property type="taxonomic scope" value="Bacteria"/>
</dbReference>
<dbReference type="HOGENOM" id="CLU_131047_2_0_11"/>
<dbReference type="OrthoDB" id="9812790at2"/>
<dbReference type="Proteomes" id="UP000002077">
    <property type="component" value="Chromosome"/>
</dbReference>
<dbReference type="GO" id="GO:0022625">
    <property type="term" value="C:cytosolic large ribosomal subunit"/>
    <property type="evidence" value="ECO:0007669"/>
    <property type="project" value="TreeGrafter"/>
</dbReference>
<dbReference type="GO" id="GO:0003735">
    <property type="term" value="F:structural constituent of ribosome"/>
    <property type="evidence" value="ECO:0007669"/>
    <property type="project" value="InterPro"/>
</dbReference>
<dbReference type="GO" id="GO:0006412">
    <property type="term" value="P:translation"/>
    <property type="evidence" value="ECO:0007669"/>
    <property type="project" value="UniProtKB-UniRule"/>
</dbReference>
<dbReference type="CDD" id="cd01658">
    <property type="entry name" value="Ribosomal_L30"/>
    <property type="match status" value="1"/>
</dbReference>
<dbReference type="FunFam" id="3.30.1390.20:FF:000001">
    <property type="entry name" value="50S ribosomal protein L30"/>
    <property type="match status" value="1"/>
</dbReference>
<dbReference type="Gene3D" id="3.30.1390.20">
    <property type="entry name" value="Ribosomal protein L30, ferredoxin-like fold domain"/>
    <property type="match status" value="1"/>
</dbReference>
<dbReference type="HAMAP" id="MF_01371_B">
    <property type="entry name" value="Ribosomal_uL30_B"/>
    <property type="match status" value="1"/>
</dbReference>
<dbReference type="InterPro" id="IPR036919">
    <property type="entry name" value="Ribo_uL30_ferredoxin-like_sf"/>
</dbReference>
<dbReference type="InterPro" id="IPR005996">
    <property type="entry name" value="Ribosomal_uL30_bac-type"/>
</dbReference>
<dbReference type="InterPro" id="IPR016082">
    <property type="entry name" value="Ribosomal_uL30_ferredoxin-like"/>
</dbReference>
<dbReference type="NCBIfam" id="TIGR01308">
    <property type="entry name" value="rpmD_bact"/>
    <property type="match status" value="1"/>
</dbReference>
<dbReference type="PANTHER" id="PTHR15892:SF2">
    <property type="entry name" value="LARGE RIBOSOMAL SUBUNIT PROTEIN UL30M"/>
    <property type="match status" value="1"/>
</dbReference>
<dbReference type="PANTHER" id="PTHR15892">
    <property type="entry name" value="MITOCHONDRIAL RIBOSOMAL PROTEIN L30"/>
    <property type="match status" value="1"/>
</dbReference>
<dbReference type="Pfam" id="PF00327">
    <property type="entry name" value="Ribosomal_L30"/>
    <property type="match status" value="1"/>
</dbReference>
<dbReference type="PIRSF" id="PIRSF002211">
    <property type="entry name" value="Ribosomal_L30_bac-type"/>
    <property type="match status" value="1"/>
</dbReference>
<dbReference type="SUPFAM" id="SSF55129">
    <property type="entry name" value="Ribosomal protein L30p/L7e"/>
    <property type="match status" value="1"/>
</dbReference>
<gene>
    <name evidence="1" type="primary">rpmD</name>
    <name type="ordered locus">cauri_0432</name>
</gene>
<accession>C3PL27</accession>
<sequence length="61" mass="6709">MALKITQVKGLVGTKPNHRANMESLGLKRIGHSVVKQDTPIIRGMVHKVRHLVTVEEVAGE</sequence>
<feature type="chain" id="PRO_1000184138" description="Large ribosomal subunit protein uL30">
    <location>
        <begin position="1"/>
        <end position="61"/>
    </location>
</feature>
<evidence type="ECO:0000255" key="1">
    <source>
        <dbReference type="HAMAP-Rule" id="MF_01371"/>
    </source>
</evidence>
<evidence type="ECO:0000305" key="2"/>
<name>RL30_CORA7</name>
<comment type="subunit">
    <text evidence="1">Part of the 50S ribosomal subunit.</text>
</comment>
<comment type="similarity">
    <text evidence="1">Belongs to the universal ribosomal protein uL30 family.</text>
</comment>
<keyword id="KW-1185">Reference proteome</keyword>
<keyword id="KW-0687">Ribonucleoprotein</keyword>
<keyword id="KW-0689">Ribosomal protein</keyword>
<organism>
    <name type="scientific">Corynebacterium aurimucosum (strain ATCC 700975 / DSM 44827 / CIP 107346 / CN-1)</name>
    <name type="common">Corynebacterium nigricans</name>
    <dbReference type="NCBI Taxonomy" id="548476"/>
    <lineage>
        <taxon>Bacteria</taxon>
        <taxon>Bacillati</taxon>
        <taxon>Actinomycetota</taxon>
        <taxon>Actinomycetes</taxon>
        <taxon>Mycobacteriales</taxon>
        <taxon>Corynebacteriaceae</taxon>
        <taxon>Corynebacterium</taxon>
    </lineage>
</organism>